<evidence type="ECO:0000255" key="1">
    <source>
        <dbReference type="HAMAP-Rule" id="MF_00360"/>
    </source>
</evidence>
<evidence type="ECO:0000305" key="2"/>
<comment type="function">
    <text evidence="1">Binds together with bS18 to 16S ribosomal RNA.</text>
</comment>
<comment type="similarity">
    <text evidence="1">Belongs to the bacterial ribosomal protein bS6 family.</text>
</comment>
<accession>Q64PH7</accession>
<gene>
    <name evidence="1" type="primary">rpsF</name>
    <name type="ordered locus">BF3862</name>
</gene>
<sequence length="114" mass="13413">MNQYETVFILTPVLSDVQMKEAVEKFKGILQAEGAEIINEENWGLKKLAYPIQKKSTGFYQLIEFNAEPTVIDKLELNFRRDERVIRFLTFRMDKYAAEYAAKRRSVKSNKKED</sequence>
<name>RS6_BACFR</name>
<keyword id="KW-0687">Ribonucleoprotein</keyword>
<keyword id="KW-0689">Ribosomal protein</keyword>
<keyword id="KW-0694">RNA-binding</keyword>
<keyword id="KW-0699">rRNA-binding</keyword>
<proteinExistence type="inferred from homology"/>
<dbReference type="EMBL" id="AP006841">
    <property type="protein sequence ID" value="BAD50604.1"/>
    <property type="molecule type" value="Genomic_DNA"/>
</dbReference>
<dbReference type="RefSeq" id="WP_005781453.1">
    <property type="nucleotide sequence ID" value="NZ_UYXF01000018.1"/>
</dbReference>
<dbReference type="RefSeq" id="YP_101138.1">
    <property type="nucleotide sequence ID" value="NC_006347.1"/>
</dbReference>
<dbReference type="SMR" id="Q64PH7"/>
<dbReference type="STRING" id="295405.BF3862"/>
<dbReference type="GeneID" id="93105003"/>
<dbReference type="KEGG" id="bfr:BF3862"/>
<dbReference type="PATRIC" id="fig|295405.11.peg.3706"/>
<dbReference type="HOGENOM" id="CLU_113441_4_3_10"/>
<dbReference type="OrthoDB" id="9812702at2"/>
<dbReference type="Proteomes" id="UP000002197">
    <property type="component" value="Chromosome"/>
</dbReference>
<dbReference type="GO" id="GO:0005737">
    <property type="term" value="C:cytoplasm"/>
    <property type="evidence" value="ECO:0007669"/>
    <property type="project" value="UniProtKB-ARBA"/>
</dbReference>
<dbReference type="GO" id="GO:1990904">
    <property type="term" value="C:ribonucleoprotein complex"/>
    <property type="evidence" value="ECO:0007669"/>
    <property type="project" value="UniProtKB-KW"/>
</dbReference>
<dbReference type="GO" id="GO:0005840">
    <property type="term" value="C:ribosome"/>
    <property type="evidence" value="ECO:0007669"/>
    <property type="project" value="UniProtKB-KW"/>
</dbReference>
<dbReference type="GO" id="GO:0070181">
    <property type="term" value="F:small ribosomal subunit rRNA binding"/>
    <property type="evidence" value="ECO:0007669"/>
    <property type="project" value="TreeGrafter"/>
</dbReference>
<dbReference type="GO" id="GO:0003735">
    <property type="term" value="F:structural constituent of ribosome"/>
    <property type="evidence" value="ECO:0007669"/>
    <property type="project" value="InterPro"/>
</dbReference>
<dbReference type="GO" id="GO:0006412">
    <property type="term" value="P:translation"/>
    <property type="evidence" value="ECO:0007669"/>
    <property type="project" value="UniProtKB-UniRule"/>
</dbReference>
<dbReference type="CDD" id="cd00473">
    <property type="entry name" value="bS6"/>
    <property type="match status" value="1"/>
</dbReference>
<dbReference type="FunFam" id="3.30.70.60:FF:000011">
    <property type="entry name" value="30S ribosomal protein S6"/>
    <property type="match status" value="1"/>
</dbReference>
<dbReference type="Gene3D" id="3.30.70.60">
    <property type="match status" value="1"/>
</dbReference>
<dbReference type="HAMAP" id="MF_00360">
    <property type="entry name" value="Ribosomal_bS6"/>
    <property type="match status" value="1"/>
</dbReference>
<dbReference type="InterPro" id="IPR000529">
    <property type="entry name" value="Ribosomal_bS6"/>
</dbReference>
<dbReference type="InterPro" id="IPR035980">
    <property type="entry name" value="Ribosomal_bS6_sf"/>
</dbReference>
<dbReference type="InterPro" id="IPR020814">
    <property type="entry name" value="Ribosomal_S6_plastid/chlpt"/>
</dbReference>
<dbReference type="InterPro" id="IPR014717">
    <property type="entry name" value="Transl_elong_EF1B/ribsomal_bS6"/>
</dbReference>
<dbReference type="NCBIfam" id="TIGR00166">
    <property type="entry name" value="S6"/>
    <property type="match status" value="1"/>
</dbReference>
<dbReference type="PANTHER" id="PTHR21011">
    <property type="entry name" value="MITOCHONDRIAL 28S RIBOSOMAL PROTEIN S6"/>
    <property type="match status" value="1"/>
</dbReference>
<dbReference type="PANTHER" id="PTHR21011:SF1">
    <property type="entry name" value="SMALL RIBOSOMAL SUBUNIT PROTEIN BS6M"/>
    <property type="match status" value="1"/>
</dbReference>
<dbReference type="Pfam" id="PF01250">
    <property type="entry name" value="Ribosomal_S6"/>
    <property type="match status" value="1"/>
</dbReference>
<dbReference type="SUPFAM" id="SSF54995">
    <property type="entry name" value="Ribosomal protein S6"/>
    <property type="match status" value="1"/>
</dbReference>
<reference key="1">
    <citation type="journal article" date="2004" name="Proc. Natl. Acad. Sci. U.S.A.">
        <title>Genomic analysis of Bacteroides fragilis reveals extensive DNA inversions regulating cell surface adaptation.</title>
        <authorList>
            <person name="Kuwahara T."/>
            <person name="Yamashita A."/>
            <person name="Hirakawa H."/>
            <person name="Nakayama H."/>
            <person name="Toh H."/>
            <person name="Okada N."/>
            <person name="Kuhara S."/>
            <person name="Hattori M."/>
            <person name="Hayashi T."/>
            <person name="Ohnishi Y."/>
        </authorList>
    </citation>
    <scope>NUCLEOTIDE SEQUENCE [LARGE SCALE GENOMIC DNA]</scope>
    <source>
        <strain>YCH46</strain>
    </source>
</reference>
<protein>
    <recommendedName>
        <fullName evidence="1">Small ribosomal subunit protein bS6</fullName>
    </recommendedName>
    <alternativeName>
        <fullName evidence="2">30S ribosomal protein S6</fullName>
    </alternativeName>
</protein>
<organism>
    <name type="scientific">Bacteroides fragilis (strain YCH46)</name>
    <dbReference type="NCBI Taxonomy" id="295405"/>
    <lineage>
        <taxon>Bacteria</taxon>
        <taxon>Pseudomonadati</taxon>
        <taxon>Bacteroidota</taxon>
        <taxon>Bacteroidia</taxon>
        <taxon>Bacteroidales</taxon>
        <taxon>Bacteroidaceae</taxon>
        <taxon>Bacteroides</taxon>
    </lineage>
</organism>
<feature type="chain" id="PRO_0000176721" description="Small ribosomal subunit protein bS6">
    <location>
        <begin position="1"/>
        <end position="114"/>
    </location>
</feature>